<protein>
    <recommendedName>
        <fullName>E3 ubiquitin-protein ligase HACE1</fullName>
        <ecNumber evidence="2">2.3.2.26</ecNumber>
    </recommendedName>
    <alternativeName>
        <fullName>HECT domain and ankyrin repeat-containing E3 ubiquitin-protein ligase 1</fullName>
    </alternativeName>
    <alternativeName>
        <fullName evidence="2">HECT-type E3 ubiquitin transferase HACE1</fullName>
    </alternativeName>
</protein>
<gene>
    <name type="primary">HACE1</name>
</gene>
<feature type="chain" id="PRO_0000415842" description="E3 ubiquitin-protein ligase HACE1">
    <location>
        <begin position="1"/>
        <end position="909"/>
    </location>
</feature>
<feature type="repeat" description="ANK 1" evidence="2">
    <location>
        <begin position="23"/>
        <end position="55"/>
    </location>
</feature>
<feature type="repeat" description="ANK 2" evidence="2">
    <location>
        <begin position="64"/>
        <end position="93"/>
    </location>
</feature>
<feature type="repeat" description="ANK 3" evidence="2">
    <location>
        <begin position="97"/>
        <end position="126"/>
    </location>
</feature>
<feature type="repeat" description="ANK 4" evidence="2">
    <location>
        <begin position="130"/>
        <end position="159"/>
    </location>
</feature>
<feature type="repeat" description="ANK 5" evidence="2">
    <location>
        <begin position="163"/>
        <end position="192"/>
    </location>
</feature>
<feature type="repeat" description="ANK 6" evidence="2">
    <location>
        <begin position="196"/>
        <end position="226"/>
    </location>
</feature>
<feature type="repeat" description="ANK 7" evidence="2">
    <location>
        <begin position="228"/>
        <end position="253"/>
    </location>
</feature>
<feature type="domain" description="HECT" evidence="3">
    <location>
        <begin position="574"/>
        <end position="909"/>
    </location>
</feature>
<feature type="region of interest" description="N-terminal helix important for homodimerization" evidence="2">
    <location>
        <begin position="1"/>
        <end position="21"/>
    </location>
</feature>
<feature type="region of interest" description="Disordered" evidence="4">
    <location>
        <begin position="396"/>
        <end position="433"/>
    </location>
</feature>
<feature type="active site" description="Glycyl thioester intermediate" evidence="3">
    <location>
        <position position="876"/>
    </location>
</feature>
<sequence length="909" mass="102053">MERAMEQLNRLTRSLRRARTVELPDDNETAVYTLMPMVMADQHRSVSELLSNSKFDVNYAFGRVKRSLLHIAANCGSVECLVLLLKKGANPNYQDISGCTPLHLAARNGQKKCMSKLLEYSADVNICNNEGLTAIHWLAVNGRTELLHDLVQHVSDVDVEDAMGQTALHVACQNGHKTTVQCLLDSGADINRPNVSGATPLYFACSHGQRDTAQILLLRGAKYLSDKNGVTPLDLCVQGGYGETCEVLIQYHPRLFQTIIQMTQNEDLRENMLRQVLEHLSQQSESQYLKILTSLAEVATTNGHKLLSISSNYDAQMKSLLRIVRIFCHVFRIGPSSPSNGIDMGYNGNKTPRSQVFKPLELLWHSLDEWLVLIATELMKNKKDSTDITSILLKQKGQDQDGTSIPPFEPPGPGSYENLSTGTGESKPDVLGGKQEASADCQDVISMTANRLSAVIQAFYMCCSCQMPPGMTSPRFIEFVCKHDEVLKCFVNRNPKIIFDHFHFLLECPELMSRFMHIIKAQPFKDRCEWFYEHLHSGQPDSDMVHRPVNENDILLVHRDSIFRSSCEVVSKANCAKLKQGIAVRFHGEEGMGQGVVREWFDILSNEIVNPDYALFTQSADGTTFQPNSNSSVNPDHLNYFRFAGQILGLALNHRQLVNIYFTRSFYKHILGIPVNYQDVASIDPEYAKNLQWILDNDISDLGLELTFSVETDVFGAMEEVPLKPGGGSILVTQNNKAEYVQLVTELRMTRAIQPQINAFLQGFHMFIPPSLIQLFDEYELELLLSGMPEIDVSDWIKNTEYTSGYEREDPVIQWFWEVVEDITPEERVLLLQFVTGSSRVPHGGFANIMGGSGLQNFTIAAVPYTPNLLPTSSTCINMLKLPEYPSKEILKDRLLVALHCGSYGYTMA</sequence>
<accession>F1N6G5</accession>
<proteinExistence type="inferred from homology"/>
<dbReference type="EC" id="2.3.2.26" evidence="2"/>
<dbReference type="EMBL" id="DAAA02026050">
    <property type="status" value="NOT_ANNOTATED_CDS"/>
    <property type="molecule type" value="Genomic_DNA"/>
</dbReference>
<dbReference type="EMBL" id="DAAA02026051">
    <property type="status" value="NOT_ANNOTATED_CDS"/>
    <property type="molecule type" value="Genomic_DNA"/>
</dbReference>
<dbReference type="EMBL" id="DAAA02026052">
    <property type="status" value="NOT_ANNOTATED_CDS"/>
    <property type="molecule type" value="Genomic_DNA"/>
</dbReference>
<dbReference type="EMBL" id="DAAA02026053">
    <property type="status" value="NOT_ANNOTATED_CDS"/>
    <property type="molecule type" value="Genomic_DNA"/>
</dbReference>
<dbReference type="RefSeq" id="NP_001179574.2">
    <property type="nucleotide sequence ID" value="NM_001192645.2"/>
</dbReference>
<dbReference type="SMR" id="F1N6G5"/>
<dbReference type="BioGRID" id="184176">
    <property type="interactions" value="1"/>
</dbReference>
<dbReference type="FunCoup" id="F1N6G5">
    <property type="interactions" value="3603"/>
</dbReference>
<dbReference type="STRING" id="9913.ENSBTAP00000002010"/>
<dbReference type="PaxDb" id="9913-ENSBTAP00000002010"/>
<dbReference type="GeneID" id="527565"/>
<dbReference type="KEGG" id="bta:527565"/>
<dbReference type="CTD" id="57531"/>
<dbReference type="VEuPathDB" id="HostDB:ENSBTAG00000001533"/>
<dbReference type="eggNOG" id="KOG0939">
    <property type="taxonomic scope" value="Eukaryota"/>
</dbReference>
<dbReference type="eggNOG" id="KOG4177">
    <property type="taxonomic scope" value="Eukaryota"/>
</dbReference>
<dbReference type="InParanoid" id="F1N6G5"/>
<dbReference type="OMA" id="QDHQDAT"/>
<dbReference type="OrthoDB" id="8068875at2759"/>
<dbReference type="Reactome" id="R-BTA-983168">
    <property type="pathway name" value="Antigen processing: Ubiquitination &amp; Proteasome degradation"/>
</dbReference>
<dbReference type="UniPathway" id="UPA00143"/>
<dbReference type="Proteomes" id="UP000009136">
    <property type="component" value="Chromosome 9"/>
</dbReference>
<dbReference type="Bgee" id="ENSBTAG00000001533">
    <property type="expression patterns" value="Expressed in oocyte and 109 other cell types or tissues"/>
</dbReference>
<dbReference type="GO" id="GO:0005737">
    <property type="term" value="C:cytoplasm"/>
    <property type="evidence" value="ECO:0000318"/>
    <property type="project" value="GO_Central"/>
</dbReference>
<dbReference type="GO" id="GO:0005783">
    <property type="term" value="C:endoplasmic reticulum"/>
    <property type="evidence" value="ECO:0007669"/>
    <property type="project" value="UniProtKB-SubCell"/>
</dbReference>
<dbReference type="GO" id="GO:0032580">
    <property type="term" value="C:Golgi cisterna membrane"/>
    <property type="evidence" value="ECO:0007669"/>
    <property type="project" value="UniProtKB-SubCell"/>
</dbReference>
<dbReference type="GO" id="GO:0000139">
    <property type="term" value="C:Golgi membrane"/>
    <property type="evidence" value="ECO:0000250"/>
    <property type="project" value="UniProtKB"/>
</dbReference>
<dbReference type="GO" id="GO:0005634">
    <property type="term" value="C:nucleus"/>
    <property type="evidence" value="ECO:0000318"/>
    <property type="project" value="GO_Central"/>
</dbReference>
<dbReference type="GO" id="GO:0031267">
    <property type="term" value="F:small GTPase binding"/>
    <property type="evidence" value="ECO:0000250"/>
    <property type="project" value="UniProtKB"/>
</dbReference>
<dbReference type="GO" id="GO:0061630">
    <property type="term" value="F:ubiquitin protein ligase activity"/>
    <property type="evidence" value="ECO:0000318"/>
    <property type="project" value="GO_Central"/>
</dbReference>
<dbReference type="GO" id="GO:0004842">
    <property type="term" value="F:ubiquitin-protein transferase activity"/>
    <property type="evidence" value="ECO:0000250"/>
    <property type="project" value="UniProtKB"/>
</dbReference>
<dbReference type="GO" id="GO:0007030">
    <property type="term" value="P:Golgi organization"/>
    <property type="evidence" value="ECO:0000250"/>
    <property type="project" value="UniProtKB"/>
</dbReference>
<dbReference type="GO" id="GO:0061025">
    <property type="term" value="P:membrane fusion"/>
    <property type="evidence" value="ECO:0000250"/>
    <property type="project" value="UniProtKB"/>
</dbReference>
<dbReference type="GO" id="GO:0070936">
    <property type="term" value="P:protein K48-linked ubiquitination"/>
    <property type="evidence" value="ECO:0000250"/>
    <property type="project" value="UniProtKB"/>
</dbReference>
<dbReference type="GO" id="GO:0016567">
    <property type="term" value="P:protein ubiquitination"/>
    <property type="evidence" value="ECO:0000250"/>
    <property type="project" value="UniProtKB"/>
</dbReference>
<dbReference type="GO" id="GO:0030334">
    <property type="term" value="P:regulation of cell migration"/>
    <property type="evidence" value="ECO:0000250"/>
    <property type="project" value="UniProtKB"/>
</dbReference>
<dbReference type="GO" id="GO:0006511">
    <property type="term" value="P:ubiquitin-dependent protein catabolic process"/>
    <property type="evidence" value="ECO:0000250"/>
    <property type="project" value="UniProtKB"/>
</dbReference>
<dbReference type="CDD" id="cd00078">
    <property type="entry name" value="HECTc"/>
    <property type="match status" value="1"/>
</dbReference>
<dbReference type="FunFam" id="3.90.1750.10:FF:000026">
    <property type="entry name" value="E3 ubiquitin-protein ligase HACE1"/>
    <property type="match status" value="1"/>
</dbReference>
<dbReference type="FunFam" id="1.25.40.20:FF:000051">
    <property type="entry name" value="E3 ubiquitin-protein ligase HACE1 isoform X1"/>
    <property type="match status" value="1"/>
</dbReference>
<dbReference type="FunFam" id="3.30.2410.10:FF:000016">
    <property type="entry name" value="E3 ubiquitin-protein ligase HACE1 isoform X1"/>
    <property type="match status" value="1"/>
</dbReference>
<dbReference type="FunFam" id="3.90.1750.10:FF:000019">
    <property type="entry name" value="E3 ubiquitin-protein ligase HACE1 isoform X1"/>
    <property type="match status" value="1"/>
</dbReference>
<dbReference type="FunFam" id="3.30.2160.10:FF:000001">
    <property type="entry name" value="E3 ubiquitin-protein ligase NEDD4-like"/>
    <property type="match status" value="1"/>
</dbReference>
<dbReference type="FunFam" id="1.25.40.20:FF:000256">
    <property type="entry name" value="HECT domain and ankyrin repeat containing E3 ubiquitin protein ligase 1"/>
    <property type="match status" value="1"/>
</dbReference>
<dbReference type="Gene3D" id="1.25.40.20">
    <property type="entry name" value="Ankyrin repeat-containing domain"/>
    <property type="match status" value="2"/>
</dbReference>
<dbReference type="Gene3D" id="3.30.2160.10">
    <property type="entry name" value="Hect, E3 ligase catalytic domain"/>
    <property type="match status" value="1"/>
</dbReference>
<dbReference type="Gene3D" id="3.30.2410.10">
    <property type="entry name" value="Hect, E3 ligase catalytic domain"/>
    <property type="match status" value="1"/>
</dbReference>
<dbReference type="Gene3D" id="3.90.1750.10">
    <property type="entry name" value="Hect, E3 ligase catalytic domains"/>
    <property type="match status" value="1"/>
</dbReference>
<dbReference type="InterPro" id="IPR002110">
    <property type="entry name" value="Ankyrin_rpt"/>
</dbReference>
<dbReference type="InterPro" id="IPR036770">
    <property type="entry name" value="Ankyrin_rpt-contain_sf"/>
</dbReference>
<dbReference type="InterPro" id="IPR050409">
    <property type="entry name" value="E3_ubiq-protein_ligase"/>
</dbReference>
<dbReference type="InterPro" id="IPR000569">
    <property type="entry name" value="HECT_dom"/>
</dbReference>
<dbReference type="InterPro" id="IPR035983">
    <property type="entry name" value="Hect_E3_ubiquitin_ligase"/>
</dbReference>
<dbReference type="PANTHER" id="PTHR11254:SF363">
    <property type="entry name" value="E3 UBIQUITIN-PROTEIN LIGASE HACE1"/>
    <property type="match status" value="1"/>
</dbReference>
<dbReference type="PANTHER" id="PTHR11254">
    <property type="entry name" value="HECT DOMAIN UBIQUITIN-PROTEIN LIGASE"/>
    <property type="match status" value="1"/>
</dbReference>
<dbReference type="Pfam" id="PF12796">
    <property type="entry name" value="Ank_2"/>
    <property type="match status" value="2"/>
</dbReference>
<dbReference type="Pfam" id="PF13857">
    <property type="entry name" value="Ank_5"/>
    <property type="match status" value="1"/>
</dbReference>
<dbReference type="Pfam" id="PF00632">
    <property type="entry name" value="HECT"/>
    <property type="match status" value="1"/>
</dbReference>
<dbReference type="PRINTS" id="PR01415">
    <property type="entry name" value="ANKYRIN"/>
</dbReference>
<dbReference type="SMART" id="SM00248">
    <property type="entry name" value="ANK"/>
    <property type="match status" value="6"/>
</dbReference>
<dbReference type="SMART" id="SM00119">
    <property type="entry name" value="HECTc"/>
    <property type="match status" value="1"/>
</dbReference>
<dbReference type="SUPFAM" id="SSF48403">
    <property type="entry name" value="Ankyrin repeat"/>
    <property type="match status" value="1"/>
</dbReference>
<dbReference type="SUPFAM" id="SSF56204">
    <property type="entry name" value="Hect, E3 ligase catalytic domain"/>
    <property type="match status" value="1"/>
</dbReference>
<dbReference type="PROSITE" id="PS50297">
    <property type="entry name" value="ANK_REP_REGION"/>
    <property type="match status" value="1"/>
</dbReference>
<dbReference type="PROSITE" id="PS50088">
    <property type="entry name" value="ANK_REPEAT"/>
    <property type="match status" value="5"/>
</dbReference>
<dbReference type="PROSITE" id="PS50237">
    <property type="entry name" value="HECT"/>
    <property type="match status" value="1"/>
</dbReference>
<evidence type="ECO:0000250" key="1">
    <source>
        <dbReference type="UniProtKB" id="Q3U0D9"/>
    </source>
</evidence>
<evidence type="ECO:0000250" key="2">
    <source>
        <dbReference type="UniProtKB" id="Q8IYU2"/>
    </source>
</evidence>
<evidence type="ECO:0000255" key="3">
    <source>
        <dbReference type="PROSITE-ProRule" id="PRU00104"/>
    </source>
</evidence>
<evidence type="ECO:0000256" key="4">
    <source>
        <dbReference type="SAM" id="MobiDB-lite"/>
    </source>
</evidence>
<reference key="1">
    <citation type="journal article" date="2009" name="Genome Biol.">
        <title>A whole-genome assembly of the domestic cow, Bos taurus.</title>
        <authorList>
            <person name="Zimin A.V."/>
            <person name="Delcher A.L."/>
            <person name="Florea L."/>
            <person name="Kelley D.R."/>
            <person name="Schatz M.C."/>
            <person name="Puiu D."/>
            <person name="Hanrahan F."/>
            <person name="Pertea G."/>
            <person name="Van Tassell C.P."/>
            <person name="Sonstegard T.S."/>
            <person name="Marcais G."/>
            <person name="Roberts M."/>
            <person name="Subramanian P."/>
            <person name="Yorke J.A."/>
            <person name="Salzberg S.L."/>
        </authorList>
    </citation>
    <scope>NUCLEOTIDE SEQUENCE [LARGE SCALE GENOMIC DNA]</scope>
    <source>
        <strain>Hereford</strain>
    </source>
</reference>
<name>HACE1_BOVIN</name>
<organism>
    <name type="scientific">Bos taurus</name>
    <name type="common">Bovine</name>
    <dbReference type="NCBI Taxonomy" id="9913"/>
    <lineage>
        <taxon>Eukaryota</taxon>
        <taxon>Metazoa</taxon>
        <taxon>Chordata</taxon>
        <taxon>Craniata</taxon>
        <taxon>Vertebrata</taxon>
        <taxon>Euteleostomi</taxon>
        <taxon>Mammalia</taxon>
        <taxon>Eutheria</taxon>
        <taxon>Laurasiatheria</taxon>
        <taxon>Artiodactyla</taxon>
        <taxon>Ruminantia</taxon>
        <taxon>Pecora</taxon>
        <taxon>Bovidae</taxon>
        <taxon>Bovinae</taxon>
        <taxon>Bos</taxon>
    </lineage>
</organism>
<keyword id="KW-0040">ANK repeat</keyword>
<keyword id="KW-0131">Cell cycle</keyword>
<keyword id="KW-0963">Cytoplasm</keyword>
<keyword id="KW-0256">Endoplasmic reticulum</keyword>
<keyword id="KW-0333">Golgi apparatus</keyword>
<keyword id="KW-0472">Membrane</keyword>
<keyword id="KW-1185">Reference proteome</keyword>
<keyword id="KW-0677">Repeat</keyword>
<keyword id="KW-0804">Transcription</keyword>
<keyword id="KW-0805">Transcription regulation</keyword>
<keyword id="KW-0808">Transferase</keyword>
<keyword id="KW-0832">Ubl conjugation</keyword>
<keyword id="KW-0833">Ubl conjugation pathway</keyword>
<comment type="function">
    <text evidence="1 2">E3 ubiquitin-protein ligase involved in Golgi membrane fusion and regulation of small GTPases (By similarity). Acts as a regulator of Golgi membrane dynamics during the cell cycle: recruited to Golgi membrane by Rab proteins and regulates postmitotic Golgi membrane fusion (By similarity). Acts by mediating ubiquitination during mitotic Golgi disassembly, ubiquitination serving as a signal for Golgi reassembly later, after cell division. Specifically binds GTP-bound RAC1, mediating ubiquitination and subsequent degradation of active RAC1, thereby playing a role in host defense against pathogens (By similarity). May also act as a transcription regulator via its interaction with RARB (By similarity).</text>
</comment>
<comment type="catalytic activity">
    <reaction evidence="2">
        <text>S-ubiquitinyl-[E2 ubiquitin-conjugating enzyme]-L-cysteine + [acceptor protein]-L-lysine = [E2 ubiquitin-conjugating enzyme]-L-cysteine + N(6)-ubiquitinyl-[acceptor protein]-L-lysine.</text>
        <dbReference type="EC" id="2.3.2.26"/>
    </reaction>
</comment>
<comment type="pathway">
    <text evidence="2">Protein modification; protein ubiquitination.</text>
</comment>
<comment type="subunit">
    <text evidence="1 2">Homodimer (By similarity). The homodimer is autoinhibited and stabilized by its N-terminal helix (By similarity). Interacts with RAB1 (RAB1A, RAB1B or RAB1C), RAB4 (RAB4A or RAB4B) and RAB11 (RAB11A or RAB11B); in a GTP-dependent manner (By similarity). Interacts with the 26S proteasomal complex through the 20S core proteasomal subunit (By similarity). Interacts with RARB (By similarity).</text>
</comment>
<comment type="subcellular location">
    <subcellularLocation>
        <location evidence="2">Golgi apparatus</location>
        <location evidence="2">Golgi stack membrane</location>
    </subcellularLocation>
    <subcellularLocation>
        <location evidence="2">Cytoplasm</location>
    </subcellularLocation>
    <subcellularLocation>
        <location evidence="2">Endoplasmic reticulum</location>
    </subcellularLocation>
    <text evidence="2">A significant portion localizes to the endoplasmic reticulum. Targeted to Golgi membrane via its interaction with Rab proteins.</text>
</comment>
<comment type="domain">
    <text evidence="2">The N-terminal lobe of the HECT domain is important for interaction with E2 ubiquitin-conjugating enzymes.</text>
</comment>
<comment type="domain">
    <text evidence="2">The ANK repeats ANK 3, ANK 4 and ANK 5 are important for recognizing the RAC1 substrate.</text>
</comment>
<comment type="PTM">
    <text evidence="2">Autoubiquitinated.</text>
</comment>